<protein>
    <recommendedName>
        <fullName evidence="15">WASH complex subunit 1</fullName>
    </recommendedName>
    <alternativeName>
        <fullName>CXYorf1-like protein on chromosome 9</fullName>
    </alternativeName>
    <alternativeName>
        <fullName>Protein FAM39E</fullName>
    </alternativeName>
    <alternativeName>
        <fullName>WAS protein family homolog 1</fullName>
    </alternativeName>
</protein>
<feature type="chain" id="PRO_0000329013" description="WASH complex subunit 1">
    <location>
        <begin position="1"/>
        <end position="465"/>
    </location>
</feature>
<feature type="domain" description="WH2">
    <location>
        <begin position="361"/>
        <end position="383"/>
    </location>
</feature>
<feature type="region of interest" description="WHD1">
    <location>
        <begin position="1"/>
        <end position="167"/>
    </location>
</feature>
<feature type="region of interest" description="Required for WASH complex assembly" evidence="1">
    <location>
        <begin position="1"/>
        <end position="54"/>
    </location>
</feature>
<feature type="region of interest" description="Disordered" evidence="4">
    <location>
        <begin position="297"/>
        <end position="359"/>
    </location>
</feature>
<feature type="region of interest" description="VCA" evidence="1">
    <location>
        <begin position="349"/>
        <end position="465"/>
    </location>
</feature>
<feature type="region of interest" description="Disordered" evidence="4">
    <location>
        <begin position="376"/>
        <end position="407"/>
    </location>
</feature>
<feature type="region of interest" description="Disordered" evidence="4">
    <location>
        <begin position="423"/>
        <end position="465"/>
    </location>
</feature>
<feature type="compositionally biased region" description="Pro residues" evidence="4">
    <location>
        <begin position="302"/>
        <end position="314"/>
    </location>
</feature>
<feature type="compositionally biased region" description="Basic and acidic residues" evidence="4">
    <location>
        <begin position="382"/>
        <end position="398"/>
    </location>
</feature>
<feature type="compositionally biased region" description="Gly residues" evidence="4">
    <location>
        <begin position="424"/>
        <end position="436"/>
    </location>
</feature>
<feature type="compositionally biased region" description="Acidic residues" evidence="4">
    <location>
        <begin position="456"/>
        <end position="465"/>
    </location>
</feature>
<feature type="cross-link" description="Glycyl lysine isopeptide (Lys-Gly) (interchain with G-Cter in ubiquitin)" evidence="9">
    <location>
        <position position="220"/>
    </location>
</feature>
<feature type="mutagenesis site" description="Abolishes ubiquitination by the TRIM27:MAGEL2 E3 ubiquitin ligase complex and impairs retrograde transport." evidence="9">
    <original>K</original>
    <variation>R</variation>
    <location>
        <position position="220"/>
    </location>
</feature>
<feature type="mutagenesis site" description="Impairs retrograde transport from endosome to Golgi apparatus." evidence="5">
    <original>W</original>
    <variation>A</variation>
    <location>
        <position position="463"/>
    </location>
</feature>
<feature type="sequence conflict" description="In Ref. 1; BAF82397." evidence="12" ref="1">
    <original>F</original>
    <variation>L</variation>
    <location>
        <position position="19"/>
    </location>
</feature>
<feature type="sequence conflict" description="In Ref. 1; BAF82397." evidence="12" ref="1">
    <original>Q</original>
    <variation>R</variation>
    <location>
        <position position="54"/>
    </location>
</feature>
<feature type="sequence conflict" description="In Ref. 1; BAF82397." evidence="12" ref="1">
    <original>G</original>
    <variation>E</variation>
    <location>
        <position position="98"/>
    </location>
</feature>
<feature type="sequence conflict" description="In Ref. 1; BAF82397." evidence="12" ref="1">
    <original>P</original>
    <variation>S</variation>
    <location>
        <position position="119"/>
    </location>
</feature>
<feature type="sequence conflict" description="In Ref. 1; BAF82397." evidence="12" ref="1">
    <original>D</original>
    <variation>Y</variation>
    <location>
        <position position="141"/>
    </location>
</feature>
<feature type="sequence conflict" description="In Ref. 1; BAF82397." evidence="12" ref="1">
    <original>H</original>
    <variation>D</variation>
    <location>
        <position position="245"/>
    </location>
</feature>
<feature type="sequence conflict" description="In Ref. 1; BAF82397." evidence="12" ref="1">
    <original>V</original>
    <variation>A</variation>
    <location>
        <position position="294"/>
    </location>
</feature>
<feature type="sequence conflict" description="In Ref. 1; BAF82397." evidence="12" ref="1">
    <original>T</original>
    <variation>TAPP</variation>
    <location>
        <position position="302"/>
    </location>
</feature>
<feature type="sequence conflict" description="In Ref. 1; BAF82397." evidence="12" ref="1">
    <original>P</original>
    <variation>S</variation>
    <location>
        <position position="321"/>
    </location>
</feature>
<feature type="sequence conflict" description="In Ref. 1; BAF82397." evidence="12" ref="1">
    <original>SSS</original>
    <variation>GSN</variation>
    <location>
        <begin position="340"/>
        <end position="342"/>
    </location>
</feature>
<feature type="sequence conflict" description="In Ref. 1; BAF82397." evidence="12" ref="1">
    <original>W</original>
    <variation>R</variation>
    <location>
        <position position="362"/>
    </location>
</feature>
<feature type="sequence conflict" description="In Ref. 1; BAF82397." evidence="12" ref="1">
    <original>M</original>
    <variation>V</variation>
    <location>
        <position position="383"/>
    </location>
</feature>
<feature type="sequence conflict" description="In Ref. 1; BAF82397." evidence="12" ref="1">
    <original>QQ</original>
    <variation>KK</variation>
    <location>
        <begin position="391"/>
        <end position="392"/>
    </location>
</feature>
<feature type="sequence conflict" description="In Ref. 1; BAF82397." evidence="12" ref="1">
    <original>H</original>
    <variation>D</variation>
    <location>
        <position position="407"/>
    </location>
</feature>
<feature type="sequence conflict" description="In Ref. 1; BAF82397." evidence="12" ref="1">
    <original>V</original>
    <variation>A</variation>
    <location>
        <position position="439"/>
    </location>
</feature>
<proteinExistence type="evidence at protein level"/>
<dbReference type="EMBL" id="AK289708">
    <property type="protein sequence ID" value="BAF82397.1"/>
    <property type="molecule type" value="mRNA"/>
</dbReference>
<dbReference type="EMBL" id="AL928970">
    <property type="status" value="NOT_ANNOTATED_CDS"/>
    <property type="molecule type" value="Genomic_DNA"/>
</dbReference>
<dbReference type="CCDS" id="CCDS78375.1"/>
<dbReference type="RefSeq" id="NP_001365019.1">
    <property type="nucleotide sequence ID" value="NM_001378090.1"/>
</dbReference>
<dbReference type="RefSeq" id="NP_878908.4">
    <property type="nucleotide sequence ID" value="NM_182905.6"/>
</dbReference>
<dbReference type="RefSeq" id="XP_024303137.1">
    <property type="nucleotide sequence ID" value="XM_024447369.2"/>
</dbReference>
<dbReference type="RefSeq" id="XP_047278535.1">
    <property type="nucleotide sequence ID" value="XM_047422579.1"/>
</dbReference>
<dbReference type="SMR" id="A8K0Z3"/>
<dbReference type="BioGRID" id="938833">
    <property type="interactions" value="90"/>
</dbReference>
<dbReference type="ComplexPortal" id="CPX-1163">
    <property type="entry name" value="WASH complex, variant WASHC1/WASHC2C"/>
</dbReference>
<dbReference type="ComplexPortal" id="CPX-1172">
    <property type="entry name" value="WASH complex, variant WASHC1/WASHC2A"/>
</dbReference>
<dbReference type="CORUM" id="A8K0Z3"/>
<dbReference type="FunCoup" id="A8K0Z3">
    <property type="interactions" value="360"/>
</dbReference>
<dbReference type="IntAct" id="A8K0Z3">
    <property type="interactions" value="23"/>
</dbReference>
<dbReference type="MINT" id="A8K0Z3"/>
<dbReference type="STRING" id="9606.ENSP00000485627"/>
<dbReference type="TCDB" id="9.A.3.1.2">
    <property type="family name" value="the sorting nexin27 (snx27)-retromer assembly apparatus (retromeraa) family"/>
</dbReference>
<dbReference type="iPTMnet" id="A8K0Z3"/>
<dbReference type="MetOSite" id="A8K0Z3"/>
<dbReference type="PhosphoSitePlus" id="A8K0Z3"/>
<dbReference type="BioMuta" id="WASHC1"/>
<dbReference type="jPOST" id="A8K0Z3"/>
<dbReference type="MassIVE" id="A8K0Z3"/>
<dbReference type="PaxDb" id="9606-ENSP00000485627"/>
<dbReference type="PeptideAtlas" id="A8K0Z3"/>
<dbReference type="ProteomicsDB" id="1843"/>
<dbReference type="Pumba" id="A8K0Z3"/>
<dbReference type="Antibodypedia" id="75837">
    <property type="antibodies" value="9 antibodies from 8 providers"/>
</dbReference>
<dbReference type="DNASU" id="100287171"/>
<dbReference type="Ensembl" id="ENST00000442898.5">
    <property type="protein sequence ID" value="ENSP00000485627.1"/>
    <property type="gene ID" value="ENSG00000181404.18"/>
</dbReference>
<dbReference type="Ensembl" id="ENST00000696149.1">
    <property type="protein sequence ID" value="ENSP00000512441.1"/>
    <property type="gene ID" value="ENSG00000181404.18"/>
</dbReference>
<dbReference type="GeneID" id="100287171"/>
<dbReference type="KEGG" id="hsa:100287171"/>
<dbReference type="MANE-Select" id="ENST00000696149.1">
    <property type="protein sequence ID" value="ENSP00000512441.1"/>
    <property type="RefSeq nucleotide sequence ID" value="NM_001378090.1"/>
    <property type="RefSeq protein sequence ID" value="NP_001365019.1"/>
</dbReference>
<dbReference type="UCSC" id="uc010mgm.2">
    <property type="organism name" value="human"/>
</dbReference>
<dbReference type="AGR" id="HGNC:24361"/>
<dbReference type="CTD" id="100287171"/>
<dbReference type="DisGeNET" id="100287171"/>
<dbReference type="GeneCards" id="WASHC1"/>
<dbReference type="HGNC" id="HGNC:24361">
    <property type="gene designation" value="WASHC1"/>
</dbReference>
<dbReference type="HPA" id="ENSG00000181404">
    <property type="expression patterns" value="Low tissue specificity"/>
</dbReference>
<dbReference type="MIM" id="613632">
    <property type="type" value="gene"/>
</dbReference>
<dbReference type="neXtProt" id="NX_A8K0Z3"/>
<dbReference type="OpenTargets" id="ENSG00000181404"/>
<dbReference type="PharmGKB" id="PA162409121"/>
<dbReference type="VEuPathDB" id="HostDB:ENSG00000181404"/>
<dbReference type="eggNOG" id="KOG1366">
    <property type="taxonomic scope" value="Eukaryota"/>
</dbReference>
<dbReference type="GeneTree" id="ENSGT00390000016717"/>
<dbReference type="HOGENOM" id="CLU_029156_1_0_1"/>
<dbReference type="InParanoid" id="A8K0Z3"/>
<dbReference type="OMA" id="EKGNRWS"/>
<dbReference type="OrthoDB" id="9535213at2759"/>
<dbReference type="PAN-GO" id="A8K0Z3">
    <property type="GO annotations" value="9 GO annotations based on evolutionary models"/>
</dbReference>
<dbReference type="PhylomeDB" id="A8K0Z3"/>
<dbReference type="PathwayCommons" id="A8K0Z3"/>
<dbReference type="SignaLink" id="A8K0Z3"/>
<dbReference type="SIGNOR" id="A8K0Z3"/>
<dbReference type="BioGRID-ORCS" id="100287171">
    <property type="hits" value="61 hits in 233 CRISPR screens"/>
</dbReference>
<dbReference type="ChiTaRS" id="WASHC1">
    <property type="organism name" value="human"/>
</dbReference>
<dbReference type="GenomeRNAi" id="100287171"/>
<dbReference type="Pharos" id="A8K0Z3">
    <property type="development level" value="Tbio"/>
</dbReference>
<dbReference type="PRO" id="PR:A8K0Z3"/>
<dbReference type="Proteomes" id="UP000005640">
    <property type="component" value="Chromosome 9"/>
</dbReference>
<dbReference type="RNAct" id="A8K0Z3">
    <property type="molecule type" value="protein"/>
</dbReference>
<dbReference type="Bgee" id="ENSG00000181404">
    <property type="expression patterns" value="Expressed in left uterine tube and 100 other cell types or tissues"/>
</dbReference>
<dbReference type="ExpressionAtlas" id="A8K0Z3">
    <property type="expression patterns" value="baseline and differential"/>
</dbReference>
<dbReference type="GO" id="GO:0005776">
    <property type="term" value="C:autophagosome"/>
    <property type="evidence" value="ECO:0000250"/>
    <property type="project" value="ParkinsonsUK-UCL"/>
</dbReference>
<dbReference type="GO" id="GO:0005814">
    <property type="term" value="C:centriole"/>
    <property type="evidence" value="ECO:0007669"/>
    <property type="project" value="UniProtKB-SubCell"/>
</dbReference>
<dbReference type="GO" id="GO:0005829">
    <property type="term" value="C:cytosol"/>
    <property type="evidence" value="ECO:0007669"/>
    <property type="project" value="GOC"/>
</dbReference>
<dbReference type="GO" id="GO:0005769">
    <property type="term" value="C:early endosome"/>
    <property type="evidence" value="ECO:0000314"/>
    <property type="project" value="UniProtKB"/>
</dbReference>
<dbReference type="GO" id="GO:0031901">
    <property type="term" value="C:early endosome membrane"/>
    <property type="evidence" value="ECO:0000303"/>
    <property type="project" value="ComplexPortal"/>
</dbReference>
<dbReference type="GO" id="GO:0005770">
    <property type="term" value="C:late endosome"/>
    <property type="evidence" value="ECO:0007669"/>
    <property type="project" value="UniProtKB-SubCell"/>
</dbReference>
<dbReference type="GO" id="GO:0055037">
    <property type="term" value="C:recycling endosome"/>
    <property type="evidence" value="ECO:0000250"/>
    <property type="project" value="UniProtKB"/>
</dbReference>
<dbReference type="GO" id="GO:0055038">
    <property type="term" value="C:recycling endosome membrane"/>
    <property type="evidence" value="ECO:0007669"/>
    <property type="project" value="UniProtKB-SubCell"/>
</dbReference>
<dbReference type="GO" id="GO:0071203">
    <property type="term" value="C:WASH complex"/>
    <property type="evidence" value="ECO:0000314"/>
    <property type="project" value="UniProtKB"/>
</dbReference>
<dbReference type="GO" id="GO:0003779">
    <property type="term" value="F:actin binding"/>
    <property type="evidence" value="ECO:0007669"/>
    <property type="project" value="UniProtKB-KW"/>
</dbReference>
<dbReference type="GO" id="GO:0043014">
    <property type="term" value="F:alpha-tubulin binding"/>
    <property type="evidence" value="ECO:0000314"/>
    <property type="project" value="UniProtKB"/>
</dbReference>
<dbReference type="GO" id="GO:0043015">
    <property type="term" value="F:gamma-tubulin binding"/>
    <property type="evidence" value="ECO:0000318"/>
    <property type="project" value="GO_Central"/>
</dbReference>
<dbReference type="GO" id="GO:0141039">
    <property type="term" value="F:phosphatidylinositol 3-kinase inhibitor activity"/>
    <property type="evidence" value="ECO:0000250"/>
    <property type="project" value="ParkinsonsUK-UCL"/>
</dbReference>
<dbReference type="GO" id="GO:0031625">
    <property type="term" value="F:ubiquitin protein ligase binding"/>
    <property type="evidence" value="ECO:0000353"/>
    <property type="project" value="UniProtKB"/>
</dbReference>
<dbReference type="GO" id="GO:0034314">
    <property type="term" value="P:Arp2/3 complex-mediated actin nucleation"/>
    <property type="evidence" value="ECO:0000314"/>
    <property type="project" value="UniProtKB"/>
</dbReference>
<dbReference type="GO" id="GO:0032456">
    <property type="term" value="P:endocytic recycling"/>
    <property type="evidence" value="ECO:0000315"/>
    <property type="project" value="UniProtKB"/>
</dbReference>
<dbReference type="GO" id="GO:0016197">
    <property type="term" value="P:endosomal transport"/>
    <property type="evidence" value="ECO:0000250"/>
    <property type="project" value="UniProtKB"/>
</dbReference>
<dbReference type="GO" id="GO:0006887">
    <property type="term" value="P:exocytosis"/>
    <property type="evidence" value="ECO:0000315"/>
    <property type="project" value="UniProtKB"/>
</dbReference>
<dbReference type="GO" id="GO:0022617">
    <property type="term" value="P:extracellular matrix disassembly"/>
    <property type="evidence" value="ECO:0000315"/>
    <property type="project" value="UniProtKB"/>
</dbReference>
<dbReference type="GO" id="GO:0010507">
    <property type="term" value="P:negative regulation of autophagy"/>
    <property type="evidence" value="ECO:0000250"/>
    <property type="project" value="ParkinsonsUK-UCL"/>
</dbReference>
<dbReference type="GO" id="GO:0030335">
    <property type="term" value="P:positive regulation of cell migration"/>
    <property type="evidence" value="ECO:0000315"/>
    <property type="project" value="UniProtKB"/>
</dbReference>
<dbReference type="GO" id="GO:0031274">
    <property type="term" value="P:positive regulation of pseudopodium assembly"/>
    <property type="evidence" value="ECO:0000315"/>
    <property type="project" value="UniProtKB"/>
</dbReference>
<dbReference type="GO" id="GO:0015031">
    <property type="term" value="P:protein transport"/>
    <property type="evidence" value="ECO:0007669"/>
    <property type="project" value="UniProtKB-KW"/>
</dbReference>
<dbReference type="GO" id="GO:0034315">
    <property type="term" value="P:regulation of Arp2/3 complex-mediated actin nucleation"/>
    <property type="evidence" value="ECO:0000303"/>
    <property type="project" value="ComplexPortal"/>
</dbReference>
<dbReference type="GO" id="GO:0031396">
    <property type="term" value="P:regulation of protein ubiquitination"/>
    <property type="evidence" value="ECO:0000250"/>
    <property type="project" value="ParkinsonsUK-UCL"/>
</dbReference>
<dbReference type="GO" id="GO:0042147">
    <property type="term" value="P:retrograde transport, endosome to Golgi"/>
    <property type="evidence" value="ECO:0000314"/>
    <property type="project" value="UniProtKB"/>
</dbReference>
<dbReference type="InterPro" id="IPR028290">
    <property type="entry name" value="WASH1"/>
</dbReference>
<dbReference type="InterPro" id="IPR021854">
    <property type="entry name" value="WASH1_WAHD"/>
</dbReference>
<dbReference type="PANTHER" id="PTHR23331">
    <property type="entry name" value="CXYORF1"/>
    <property type="match status" value="1"/>
</dbReference>
<dbReference type="PANTHER" id="PTHR23331:SF5">
    <property type="entry name" value="WAS PROTEIN FAMILY HOMOLOG 2-RELATED"/>
    <property type="match status" value="1"/>
</dbReference>
<dbReference type="Pfam" id="PF11945">
    <property type="entry name" value="WASH_WAHD"/>
    <property type="match status" value="1"/>
</dbReference>
<accession>A8K0Z3</accession>
<comment type="function">
    <text evidence="1 2 5 6 7 8 9 14">Acts as a component of the WASH core complex that functions as a nucleation-promoting factor (NPF) at the surface of endosomes, where it recruits and activates the Arp2/3 complex to induce actin polymerization, playing a key role in the fission of tubules that serve as transport intermediates during endosome sorting (PubMed:19922874, PubMed:19922875, PubMed:20498093, PubMed:23452853). Involved in endocytic trafficking of EGF (By similarity). Involved in transferrin receptor recycling. Regulates the trafficking of endosomal alpha5beta1 integrin to the plasma membrane and involved in invasive cell migration (PubMed:22114305). In T-cells involved in endosome-to-membrane recycling of receptors including T-cell receptor (TCR), CD28 and ITGAL; proposed to be implicated in T cell proliferation and effector function. In dendritic cells involved in endosome-to-membrane recycling of major histocompatibility complex (MHC) class II probably involving retromer and subsequently allowing antigen sampling, loading and presentation during T-cell activation (By similarity). Involved in Arp2/3 complex-dependent actin assembly driving Salmonella typhimurium invasion independent of ruffling. Involved in the exocytosis of MMP14 leading to matrix remodeling during invasive migration and implicating late endosome-to-plasma membrane tubular connections and cooperation with the exocyst complex (PubMed:24344185). Involved in negative regulation of autophagy independently from its role in endosomal sorting by inhibiting BECN1 ubiquitination to inactivate PIK3C3/Vps34 activity (By similarity).</text>
</comment>
<comment type="subunit">
    <text evidence="2 3 5 6 7 10 11">Component of the WASH core complex also described as WASH regulatory complex (SHRC) composed of WASH (WASHC1, WASH2P or WASH3P), WASHC2 (WASHC2A or WASHC2C), WASHC3, WASHC4 and WASHC5. The WASH core complex associates via WASHC2 with the F-actin-capping protein dimer (formed by CAPZA1, CAPZA2 or CAPZA3 and CAPZB) in a transient or substoichiometric manner which was initially described as WASH complex (PubMed:19922875, PubMed:20498093). Interacts (via WHD1 region) with WASHC2C; the interaction is direct (PubMed:19922874). Interacts with VPS35; mediates the association with the retromer CSC complex. Interacts with FKBP15. Interacts with alpha-tubulin. Interacts with BECN1; this interaction can be competed out by AMBRA1 binding. Interacts with BLOC1S2; may associate with the BLOC-1 complex. Interacts with tubulin gamma chain (TUBG1 or TUBG2) (By similarity). Interacts with EXOC1, EXOC4, EXOC8; in MMP14-positive endosomes in breast tumor cells; indicative for an association with the exocyst complex (PubMed:24344185). Interacts with TBC1D23 (PubMed:29084197).</text>
</comment>
<comment type="interaction">
    <interactant intactId="EBI-6160405">
        <id>A8K0Z3</id>
    </interactant>
    <interactant intactId="EBI-949378">
        <id>Q14457</id>
        <label>BECN1</label>
    </interactant>
    <organismsDiffer>false</organismsDiffer>
    <experiments>3</experiments>
</comment>
<comment type="interaction">
    <interactant intactId="EBI-6160405">
        <id>A8K0Z3</id>
    </interactant>
    <interactant intactId="EBI-1045313">
        <id>Q9NV70</id>
        <label>EXOC1</label>
    </interactant>
    <organismsDiffer>false</organismsDiffer>
    <experiments>2</experiments>
</comment>
<comment type="interaction">
    <interactant intactId="EBI-6160405">
        <id>A8K0Z3</id>
    </interactant>
    <interactant intactId="EBI-742102">
        <id>Q8IYI6</id>
        <label>EXOC8</label>
    </interactant>
    <organismsDiffer>false</organismsDiffer>
    <experiments>3</experiments>
</comment>
<comment type="subcellular location">
    <subcellularLocation>
        <location evidence="5">Early endosome membrane</location>
    </subcellularLocation>
    <subcellularLocation>
        <location evidence="2">Recycling endosome membrane</location>
    </subcellularLocation>
    <subcellularLocation>
        <location evidence="8 10">Late endosome</location>
    </subcellularLocation>
    <subcellularLocation>
        <location evidence="2">Cytoplasmic vesicle</location>
        <location evidence="2">Autophagosome</location>
    </subcellularLocation>
    <subcellularLocation>
        <location evidence="2">Cytoplasm</location>
        <location evidence="2">Cytoskeleton</location>
        <location evidence="2">Microtubule organizing center</location>
        <location evidence="2">Centrosome</location>
        <location evidence="2">Centriole</location>
    </subcellularLocation>
    <text evidence="2 5 10">Localization to the endosome membrane is mediated via its interaction with WASHC2 (PubMed:19922874). Localizes to MMP14-positive late endosomes and transiently to invadipodia (PubMed:24344185). Localized to Salmonella typhimurium entry sites (By similarity).</text>
</comment>
<comment type="domain">
    <text evidence="1">The VCA (verprolin, cofilin, acidic) domain promotes actin polymerization by the Arp2/3 complex in vitro.</text>
</comment>
<comment type="PTM">
    <text evidence="9">Ubiquitinated at Lys-220 via 'Lys-63'-linked ubiquitin chains by the TRIM27:MAGEL2 E3 ubiquitin ligase complex, leading to promote endosomal F-actin assembly.</text>
</comment>
<comment type="miscellaneous">
    <text evidence="13">WASH genes duplicated to multiple chromosomal ends during primate evolution, with highest copy number reached in humans, whose WASH repertoires probably vary extensively among individuals (PubMed:18159949). It is therefore difficult to determine which gene is functional or not. The telomeric region of chromosome 9p is paralogous to the pericentromeric regions of chromosome 9 as well as to 2q. Paralogous regions contain 7 transcriptional units. Duplicated WASH genes are also present in the Xq/Yq pseudoautosomal region, as well as on chromosome 1 and 15. The chromosome 16 copy seems to be a pseudogene.</text>
</comment>
<comment type="similarity">
    <text evidence="12">Belongs to the WASH1 family.</text>
</comment>
<comment type="caution">
    <text evidence="6 7">One study reported a nucleation-promoting factor (NPF) activity towards the Arp2/3 complex using partially purified samples of the WASH complex (PubMed:19922875). In another study, the in vitro reconstituted and purified recombinant WASH core complex, consisting of WASHC3, WASHC4, WASHC5, WASHC1 and the N-terminal residues 1-356 of WASHC2, did not show any NPF activity towards the Arp2/3 complex (PubMed:20498093).</text>
</comment>
<organism>
    <name type="scientific">Homo sapiens</name>
    <name type="common">Human</name>
    <dbReference type="NCBI Taxonomy" id="9606"/>
    <lineage>
        <taxon>Eukaryota</taxon>
        <taxon>Metazoa</taxon>
        <taxon>Chordata</taxon>
        <taxon>Craniata</taxon>
        <taxon>Vertebrata</taxon>
        <taxon>Euteleostomi</taxon>
        <taxon>Mammalia</taxon>
        <taxon>Eutheria</taxon>
        <taxon>Euarchontoglires</taxon>
        <taxon>Primates</taxon>
        <taxon>Haplorrhini</taxon>
        <taxon>Catarrhini</taxon>
        <taxon>Hominidae</taxon>
        <taxon>Homo</taxon>
    </lineage>
</organism>
<gene>
    <name evidence="15" type="primary">WASHC1</name>
    <name type="synonym">FAM39E</name>
    <name type="synonym">WASH1</name>
</gene>
<name>WASH1_HUMAN</name>
<reference key="1">
    <citation type="journal article" date="2004" name="Nat. Genet.">
        <title>Complete sequencing and characterization of 21,243 full-length human cDNAs.</title>
        <authorList>
            <person name="Ota T."/>
            <person name="Suzuki Y."/>
            <person name="Nishikawa T."/>
            <person name="Otsuki T."/>
            <person name="Sugiyama T."/>
            <person name="Irie R."/>
            <person name="Wakamatsu A."/>
            <person name="Hayashi K."/>
            <person name="Sato H."/>
            <person name="Nagai K."/>
            <person name="Kimura K."/>
            <person name="Makita H."/>
            <person name="Sekine M."/>
            <person name="Obayashi M."/>
            <person name="Nishi T."/>
            <person name="Shibahara T."/>
            <person name="Tanaka T."/>
            <person name="Ishii S."/>
            <person name="Yamamoto J."/>
            <person name="Saito K."/>
            <person name="Kawai Y."/>
            <person name="Isono Y."/>
            <person name="Nakamura Y."/>
            <person name="Nagahari K."/>
            <person name="Murakami K."/>
            <person name="Yasuda T."/>
            <person name="Iwayanagi T."/>
            <person name="Wagatsuma M."/>
            <person name="Shiratori A."/>
            <person name="Sudo H."/>
            <person name="Hosoiri T."/>
            <person name="Kaku Y."/>
            <person name="Kodaira H."/>
            <person name="Kondo H."/>
            <person name="Sugawara M."/>
            <person name="Takahashi M."/>
            <person name="Kanda K."/>
            <person name="Yokoi T."/>
            <person name="Furuya T."/>
            <person name="Kikkawa E."/>
            <person name="Omura Y."/>
            <person name="Abe K."/>
            <person name="Kamihara K."/>
            <person name="Katsuta N."/>
            <person name="Sato K."/>
            <person name="Tanikawa M."/>
            <person name="Yamazaki M."/>
            <person name="Ninomiya K."/>
            <person name="Ishibashi T."/>
            <person name="Yamashita H."/>
            <person name="Murakawa K."/>
            <person name="Fujimori K."/>
            <person name="Tanai H."/>
            <person name="Kimata M."/>
            <person name="Watanabe M."/>
            <person name="Hiraoka S."/>
            <person name="Chiba Y."/>
            <person name="Ishida S."/>
            <person name="Ono Y."/>
            <person name="Takiguchi S."/>
            <person name="Watanabe S."/>
            <person name="Yosida M."/>
            <person name="Hotuta T."/>
            <person name="Kusano J."/>
            <person name="Kanehori K."/>
            <person name="Takahashi-Fujii A."/>
            <person name="Hara H."/>
            <person name="Tanase T.-O."/>
            <person name="Nomura Y."/>
            <person name="Togiya S."/>
            <person name="Komai F."/>
            <person name="Hara R."/>
            <person name="Takeuchi K."/>
            <person name="Arita M."/>
            <person name="Imose N."/>
            <person name="Musashino K."/>
            <person name="Yuuki H."/>
            <person name="Oshima A."/>
            <person name="Sasaki N."/>
            <person name="Aotsuka S."/>
            <person name="Yoshikawa Y."/>
            <person name="Matsunawa H."/>
            <person name="Ichihara T."/>
            <person name="Shiohata N."/>
            <person name="Sano S."/>
            <person name="Moriya S."/>
            <person name="Momiyama H."/>
            <person name="Satoh N."/>
            <person name="Takami S."/>
            <person name="Terashima Y."/>
            <person name="Suzuki O."/>
            <person name="Nakagawa S."/>
            <person name="Senoh A."/>
            <person name="Mizoguchi H."/>
            <person name="Goto Y."/>
            <person name="Shimizu F."/>
            <person name="Wakebe H."/>
            <person name="Hishigaki H."/>
            <person name="Watanabe T."/>
            <person name="Sugiyama A."/>
            <person name="Takemoto M."/>
            <person name="Kawakami B."/>
            <person name="Yamazaki M."/>
            <person name="Watanabe K."/>
            <person name="Kumagai A."/>
            <person name="Itakura S."/>
            <person name="Fukuzumi Y."/>
            <person name="Fujimori Y."/>
            <person name="Komiyama M."/>
            <person name="Tashiro H."/>
            <person name="Tanigami A."/>
            <person name="Fujiwara T."/>
            <person name="Ono T."/>
            <person name="Yamada K."/>
            <person name="Fujii Y."/>
            <person name="Ozaki K."/>
            <person name="Hirao M."/>
            <person name="Ohmori Y."/>
            <person name="Kawabata A."/>
            <person name="Hikiji T."/>
            <person name="Kobatake N."/>
            <person name="Inagaki H."/>
            <person name="Ikema Y."/>
            <person name="Okamoto S."/>
            <person name="Okitani R."/>
            <person name="Kawakami T."/>
            <person name="Noguchi S."/>
            <person name="Itoh T."/>
            <person name="Shigeta K."/>
            <person name="Senba T."/>
            <person name="Matsumura K."/>
            <person name="Nakajima Y."/>
            <person name="Mizuno T."/>
            <person name="Morinaga M."/>
            <person name="Sasaki M."/>
            <person name="Togashi T."/>
            <person name="Oyama M."/>
            <person name="Hata H."/>
            <person name="Watanabe M."/>
            <person name="Komatsu T."/>
            <person name="Mizushima-Sugano J."/>
            <person name="Satoh T."/>
            <person name="Shirai Y."/>
            <person name="Takahashi Y."/>
            <person name="Nakagawa K."/>
            <person name="Okumura K."/>
            <person name="Nagase T."/>
            <person name="Nomura N."/>
            <person name="Kikuchi H."/>
            <person name="Masuho Y."/>
            <person name="Yamashita R."/>
            <person name="Nakai K."/>
            <person name="Yada T."/>
            <person name="Nakamura Y."/>
            <person name="Ohara O."/>
            <person name="Isogai T."/>
            <person name="Sugano S."/>
        </authorList>
    </citation>
    <scope>NUCLEOTIDE SEQUENCE [LARGE SCALE MRNA]</scope>
    <source>
        <tissue>Brain</tissue>
    </source>
</reference>
<reference key="2">
    <citation type="journal article" date="2004" name="Nature">
        <title>DNA sequence and analysis of human chromosome 9.</title>
        <authorList>
            <person name="Humphray S.J."/>
            <person name="Oliver K."/>
            <person name="Hunt A.R."/>
            <person name="Plumb R.W."/>
            <person name="Loveland J.E."/>
            <person name="Howe K.L."/>
            <person name="Andrews T.D."/>
            <person name="Searle S."/>
            <person name="Hunt S.E."/>
            <person name="Scott C.E."/>
            <person name="Jones M.C."/>
            <person name="Ainscough R."/>
            <person name="Almeida J.P."/>
            <person name="Ambrose K.D."/>
            <person name="Ashwell R.I.S."/>
            <person name="Babbage A.K."/>
            <person name="Babbage S."/>
            <person name="Bagguley C.L."/>
            <person name="Bailey J."/>
            <person name="Banerjee R."/>
            <person name="Barker D.J."/>
            <person name="Barlow K.F."/>
            <person name="Bates K."/>
            <person name="Beasley H."/>
            <person name="Beasley O."/>
            <person name="Bird C.P."/>
            <person name="Bray-Allen S."/>
            <person name="Brown A.J."/>
            <person name="Brown J.Y."/>
            <person name="Burford D."/>
            <person name="Burrill W."/>
            <person name="Burton J."/>
            <person name="Carder C."/>
            <person name="Carter N.P."/>
            <person name="Chapman J.C."/>
            <person name="Chen Y."/>
            <person name="Clarke G."/>
            <person name="Clark S.Y."/>
            <person name="Clee C.M."/>
            <person name="Clegg S."/>
            <person name="Collier R.E."/>
            <person name="Corby N."/>
            <person name="Crosier M."/>
            <person name="Cummings A.T."/>
            <person name="Davies J."/>
            <person name="Dhami P."/>
            <person name="Dunn M."/>
            <person name="Dutta I."/>
            <person name="Dyer L.W."/>
            <person name="Earthrowl M.E."/>
            <person name="Faulkner L."/>
            <person name="Fleming C.J."/>
            <person name="Frankish A."/>
            <person name="Frankland J.A."/>
            <person name="French L."/>
            <person name="Fricker D.G."/>
            <person name="Garner P."/>
            <person name="Garnett J."/>
            <person name="Ghori J."/>
            <person name="Gilbert J.G.R."/>
            <person name="Glison C."/>
            <person name="Grafham D.V."/>
            <person name="Gribble S."/>
            <person name="Griffiths C."/>
            <person name="Griffiths-Jones S."/>
            <person name="Grocock R."/>
            <person name="Guy J."/>
            <person name="Hall R.E."/>
            <person name="Hammond S."/>
            <person name="Harley J.L."/>
            <person name="Harrison E.S.I."/>
            <person name="Hart E.A."/>
            <person name="Heath P.D."/>
            <person name="Henderson C.D."/>
            <person name="Hopkins B.L."/>
            <person name="Howard P.J."/>
            <person name="Howden P.J."/>
            <person name="Huckle E."/>
            <person name="Johnson C."/>
            <person name="Johnson D."/>
            <person name="Joy A.A."/>
            <person name="Kay M."/>
            <person name="Keenan S."/>
            <person name="Kershaw J.K."/>
            <person name="Kimberley A.M."/>
            <person name="King A."/>
            <person name="Knights A."/>
            <person name="Laird G.K."/>
            <person name="Langford C."/>
            <person name="Lawlor S."/>
            <person name="Leongamornlert D.A."/>
            <person name="Leversha M."/>
            <person name="Lloyd C."/>
            <person name="Lloyd D.M."/>
            <person name="Lovell J."/>
            <person name="Martin S."/>
            <person name="Mashreghi-Mohammadi M."/>
            <person name="Matthews L."/>
            <person name="McLaren S."/>
            <person name="McLay K.E."/>
            <person name="McMurray A."/>
            <person name="Milne S."/>
            <person name="Nickerson T."/>
            <person name="Nisbett J."/>
            <person name="Nordsiek G."/>
            <person name="Pearce A.V."/>
            <person name="Peck A.I."/>
            <person name="Porter K.M."/>
            <person name="Pandian R."/>
            <person name="Pelan S."/>
            <person name="Phillimore B."/>
            <person name="Povey S."/>
            <person name="Ramsey Y."/>
            <person name="Rand V."/>
            <person name="Scharfe M."/>
            <person name="Sehra H.K."/>
            <person name="Shownkeen R."/>
            <person name="Sims S.K."/>
            <person name="Skuce C.D."/>
            <person name="Smith M."/>
            <person name="Steward C.A."/>
            <person name="Swarbreck D."/>
            <person name="Sycamore N."/>
            <person name="Tester J."/>
            <person name="Thorpe A."/>
            <person name="Tracey A."/>
            <person name="Tromans A."/>
            <person name="Thomas D.W."/>
            <person name="Wall M."/>
            <person name="Wallis J.M."/>
            <person name="West A.P."/>
            <person name="Whitehead S.L."/>
            <person name="Willey D.L."/>
            <person name="Williams S.A."/>
            <person name="Wilming L."/>
            <person name="Wray P.W."/>
            <person name="Young L."/>
            <person name="Ashurst J.L."/>
            <person name="Coulson A."/>
            <person name="Blocker H."/>
            <person name="Durbin R.M."/>
            <person name="Sulston J.E."/>
            <person name="Hubbard T."/>
            <person name="Jackson M.J."/>
            <person name="Bentley D.R."/>
            <person name="Beck S."/>
            <person name="Rogers J."/>
            <person name="Dunham I."/>
        </authorList>
    </citation>
    <scope>NUCLEOTIDE SEQUENCE [LARGE SCALE GENOMIC DNA]</scope>
</reference>
<reference key="3">
    <citation type="journal article" date="2000" name="Hum. Mol. Genet.">
        <title>Differentially regulated and evolved genes in the fully sequenced Xq/Yq pseudoautosomal region.</title>
        <authorList>
            <person name="Ciccodicola A."/>
            <person name="D'Esposito M."/>
            <person name="Esposito T."/>
            <person name="Gianfrancesco F."/>
            <person name="Migliaccio C."/>
            <person name="Miano M.G."/>
            <person name="Matarazzo M.R."/>
            <person name="Vacca M."/>
            <person name="Franze A."/>
            <person name="Cuccurese M."/>
            <person name="Cocchia M."/>
            <person name="Curci A."/>
            <person name="Terracciano A."/>
            <person name="Torino A."/>
            <person name="Cocchia S."/>
            <person name="Mercadante G."/>
            <person name="Pannone E."/>
            <person name="Archidiacono N."/>
            <person name="Rocchi M."/>
            <person name="Schlessinger D."/>
            <person name="D'Urso M."/>
        </authorList>
    </citation>
    <scope>GENE DUPLICATION</scope>
</reference>
<reference key="4">
    <citation type="journal article" date="2007" name="PLoS Genet.">
        <title>Human subtelomeric WASH genes encode a new subclass of the WASP family.</title>
        <authorList>
            <person name="Linardopoulou E.V."/>
            <person name="Parghi S.S."/>
            <person name="Friedman C."/>
            <person name="Osborn G.E."/>
            <person name="Parkhurst S.M."/>
            <person name="Trask B.J."/>
        </authorList>
    </citation>
    <scope>GENE DUPLICATION</scope>
</reference>
<reference key="5">
    <citation type="journal article" date="2009" name="Dev. Cell">
        <title>A FAM21-containing WASH complex regulates retromer-dependent sorting.</title>
        <authorList>
            <person name="Gomez T.S."/>
            <person name="Billadeau D.D."/>
        </authorList>
    </citation>
    <scope>FUNCTION</scope>
    <scope>SUBCELLULAR LOCATION</scope>
    <scope>INTERACTION WITH WASHC2C</scope>
    <scope>TUBULIN-BINDING</scope>
    <scope>MUTAGENESIS OF TRP-463</scope>
</reference>
<reference key="6">
    <citation type="journal article" date="2009" name="Dev. Cell">
        <title>The Arp2/3 activator WASH controls the fission of endosomes through a large multiprotein complex.</title>
        <authorList>
            <person name="Derivery E."/>
            <person name="Sousa C."/>
            <person name="Gautier J.J."/>
            <person name="Lombard B."/>
            <person name="Loew D."/>
            <person name="Gautreau A."/>
        </authorList>
    </citation>
    <scope>FUNCTION</scope>
    <scope>FUNCTION OF THE WASH COMPLEX</scope>
    <scope>IDENTIFICATION IN THE WASH COMPLEX</scope>
</reference>
<reference key="7">
    <citation type="journal article" date="2010" name="Proc. Natl. Acad. Sci. U.S.A.">
        <title>WASH and WAVE actin regulators of the Wiskott-Aldrich syndrome protein (WASP) family are controlled by analogous structurally related complexes.</title>
        <authorList>
            <person name="Jia D."/>
            <person name="Gomez T.S."/>
            <person name="Metlagel Z."/>
            <person name="Umetani J."/>
            <person name="Otwinowski Z."/>
            <person name="Rosen M.K."/>
            <person name="Billadeau D.D."/>
        </authorList>
    </citation>
    <scope>IDENTIFICATION IN THE WASH CORE COMPLEX</scope>
</reference>
<reference key="8">
    <citation type="journal article" date="2011" name="J. Cell Sci.">
        <title>The Arp2/3 activator WASH regulates alpha5beta1-integrin-mediated invasive migration.</title>
        <authorList>
            <person name="Zech T."/>
            <person name="Calaminus S.D."/>
            <person name="Caswell P."/>
            <person name="Spence H.J."/>
            <person name="Carnell M."/>
            <person name="Insall R.H."/>
            <person name="Norman J."/>
            <person name="Machesky L.M."/>
        </authorList>
    </citation>
    <scope>FUNCTION</scope>
    <scope>SUBCELLULAR LOCATION</scope>
</reference>
<reference key="9">
    <citation type="journal article" date="2013" name="Cell">
        <title>Regulation of WASH-dependent actin polymerization and protein trafficking by ubiquitination.</title>
        <authorList>
            <person name="Hao Y.H."/>
            <person name="Doyle J.M."/>
            <person name="Ramanathan S."/>
            <person name="Gomez T.S."/>
            <person name="Jia D."/>
            <person name="Xu M."/>
            <person name="Chen Z.J."/>
            <person name="Billadeau D.D."/>
            <person name="Rosen M.K."/>
            <person name="Potts P.R."/>
        </authorList>
    </citation>
    <scope>FUNCTION</scope>
    <scope>UBIQUITINATION AT LYS-220</scope>
    <scope>MUTAGENESIS OF LYS-220</scope>
</reference>
<reference key="10">
    <citation type="journal article" date="2013" name="J. Cell Biol.">
        <title>Endosomal WASH and exocyst complexes control exocytosis of MT1-MMP at invadopodia.</title>
        <authorList>
            <person name="Monteiro P."/>
            <person name="Rosse C."/>
            <person name="Castro-Castro A."/>
            <person name="Irondelle M."/>
            <person name="Lagoutte E."/>
            <person name="Paul-Gilloteaux P."/>
            <person name="Desnos C."/>
            <person name="Formstecher E."/>
            <person name="Darchen F."/>
            <person name="Perrais D."/>
            <person name="Gautreau A."/>
            <person name="Hertzog M."/>
            <person name="Chavrier P."/>
        </authorList>
    </citation>
    <scope>FUNCTION</scope>
    <scope>INTERACTION WITH EXOC1; EXOC4 AND EXOC8</scope>
    <scope>SUBCELLULAR LOCATION</scope>
</reference>
<reference key="11">
    <citation type="journal article" date="2017" name="Nat. Cell Biol.">
        <title>TBC1D23 is a bridging factor for endosomal vesicle capture by golgins at the trans-Golgi.</title>
        <authorList>
            <person name="Shin J.J.H."/>
            <person name="Gillingham A.K."/>
            <person name="Begum F."/>
            <person name="Chadwick J."/>
            <person name="Munro S."/>
        </authorList>
    </citation>
    <scope>INTERACTION WITH TBC1D23</scope>
</reference>
<keyword id="KW-0009">Actin-binding</keyword>
<keyword id="KW-0963">Cytoplasm</keyword>
<keyword id="KW-0968">Cytoplasmic vesicle</keyword>
<keyword id="KW-0206">Cytoskeleton</keyword>
<keyword id="KW-0967">Endosome</keyword>
<keyword id="KW-1017">Isopeptide bond</keyword>
<keyword id="KW-0472">Membrane</keyword>
<keyword id="KW-0653">Protein transport</keyword>
<keyword id="KW-1185">Reference proteome</keyword>
<keyword id="KW-0813">Transport</keyword>
<keyword id="KW-0832">Ubl conjugation</keyword>
<sequence length="465" mass="50328">MTPVRMQHSLAGQTYAVPFIQPDLRREEAVQQMADALQYLQKVSGDIFSRISQQVEQSRSQVQAIGEKVSLAQAKIEKIKGSKKAIKVFSSAKYPAPGRLQEYGSIFTGAQDPGLQRRPRHRIQSKHRPLDERALQEKLKDFPVCVSTKPEPEDDAEEGLGGLPSNISSVSSLLLFNTTENLYKKYVFLDPLAGAVTKTHVMLGAETEEKLFDAPLSISKREQLEQQVPENYFYVPDLGQVPEIHVPSYLPDLPGIANDLMYSADLGPGIAPSAPGTIPELPTFHTEVAEPLKVDLQDGVLTPPPPPPPPPPAPEVLASAPPLPPSTAAPVGQGARQDDSSSSASPSVQGAPREVVDPSGGWATLLESIRQAGGIGKAKLRSMKERKLEKQQQKEQEQVRATSQGGHLMSDLFNKLVMRRKGISGKGPGAGEGPGGAFVRVSDSIPPLPPPQQPQAEEDEDDWES</sequence>
<evidence type="ECO:0000250" key="1">
    <source>
        <dbReference type="UniProtKB" id="C4AMC7"/>
    </source>
</evidence>
<evidence type="ECO:0000250" key="2">
    <source>
        <dbReference type="UniProtKB" id="Q8VDD8"/>
    </source>
</evidence>
<evidence type="ECO:0000250" key="3">
    <source>
        <dbReference type="UniProtKB" id="Q9Y4E1"/>
    </source>
</evidence>
<evidence type="ECO:0000256" key="4">
    <source>
        <dbReference type="SAM" id="MobiDB-lite"/>
    </source>
</evidence>
<evidence type="ECO:0000269" key="5">
    <source>
    </source>
</evidence>
<evidence type="ECO:0000269" key="6">
    <source>
    </source>
</evidence>
<evidence type="ECO:0000269" key="7">
    <source>
    </source>
</evidence>
<evidence type="ECO:0000269" key="8">
    <source>
    </source>
</evidence>
<evidence type="ECO:0000269" key="9">
    <source>
    </source>
</evidence>
<evidence type="ECO:0000269" key="10">
    <source>
    </source>
</evidence>
<evidence type="ECO:0000269" key="11">
    <source>
    </source>
</evidence>
<evidence type="ECO:0000305" key="12"/>
<evidence type="ECO:0000305" key="13">
    <source>
    </source>
</evidence>
<evidence type="ECO:0000305" key="14">
    <source>
    </source>
</evidence>
<evidence type="ECO:0000312" key="15">
    <source>
        <dbReference type="HGNC" id="HGNC:24361"/>
    </source>
</evidence>